<protein>
    <recommendedName>
        <fullName evidence="1">Sulfolipid-1 exporter MmpL8</fullName>
    </recommendedName>
</protein>
<comment type="function">
    <text evidence="1">Required for the biosynthesis and the transport across the inner membrane of sulfolipid-1 (SL-1), which is a major cell wall lipid of pathogenic mycobacteria. Could also transport SL1278 (2-palmitoyl-3-(C43)-phthioceranyl-alpha, alpha'-D-trehalose-2'-sulfate), which is the precursor of SL-1.</text>
</comment>
<comment type="subcellular location">
    <subcellularLocation>
        <location evidence="1">Cell inner membrane</location>
        <topology evidence="2">Multi-pass membrane protein</topology>
    </subcellularLocation>
</comment>
<comment type="similarity">
    <text evidence="4">Belongs to the resistance-nodulation-cell division (RND) (TC 2.A.6) family. MmpL subfamily.</text>
</comment>
<name>MMPL8_MYCTO</name>
<keyword id="KW-0997">Cell inner membrane</keyword>
<keyword id="KW-1003">Cell membrane</keyword>
<keyword id="KW-0961">Cell wall biogenesis/degradation</keyword>
<keyword id="KW-0445">Lipid transport</keyword>
<keyword id="KW-0472">Membrane</keyword>
<keyword id="KW-1185">Reference proteome</keyword>
<keyword id="KW-0812">Transmembrane</keyword>
<keyword id="KW-1133">Transmembrane helix</keyword>
<keyword id="KW-0813">Transport</keyword>
<reference key="1">
    <citation type="journal article" date="2002" name="J. Bacteriol.">
        <title>Whole-genome comparison of Mycobacterium tuberculosis clinical and laboratory strains.</title>
        <authorList>
            <person name="Fleischmann R.D."/>
            <person name="Alland D."/>
            <person name="Eisen J.A."/>
            <person name="Carpenter L."/>
            <person name="White O."/>
            <person name="Peterson J.D."/>
            <person name="DeBoy R.T."/>
            <person name="Dodson R.J."/>
            <person name="Gwinn M.L."/>
            <person name="Haft D.H."/>
            <person name="Hickey E.K."/>
            <person name="Kolonay J.F."/>
            <person name="Nelson W.C."/>
            <person name="Umayam L.A."/>
            <person name="Ermolaeva M.D."/>
            <person name="Salzberg S.L."/>
            <person name="Delcher A."/>
            <person name="Utterback T.R."/>
            <person name="Weidman J.F."/>
            <person name="Khouri H.M."/>
            <person name="Gill J."/>
            <person name="Mikula A."/>
            <person name="Bishai W."/>
            <person name="Jacobs W.R. Jr."/>
            <person name="Venter J.C."/>
            <person name="Fraser C.M."/>
        </authorList>
    </citation>
    <scope>NUCLEOTIDE SEQUENCE [LARGE SCALE GENOMIC DNA]</scope>
    <source>
        <strain>CDC 1551 / Oshkosh</strain>
    </source>
</reference>
<proteinExistence type="inferred from homology"/>
<feature type="chain" id="PRO_0000427769" description="Sulfolipid-1 exporter MmpL8">
    <location>
        <begin position="1"/>
        <end position="1089"/>
    </location>
</feature>
<feature type="transmembrane region" description="Helical" evidence="2">
    <location>
        <begin position="44"/>
        <end position="64"/>
    </location>
</feature>
<feature type="transmembrane region" description="Helical" evidence="2">
    <location>
        <begin position="222"/>
        <end position="242"/>
    </location>
</feature>
<feature type="transmembrane region" description="Helical" evidence="2">
    <location>
        <begin position="257"/>
        <end position="277"/>
    </location>
</feature>
<feature type="transmembrane region" description="Helical" evidence="2">
    <location>
        <begin position="316"/>
        <end position="336"/>
    </location>
</feature>
<feature type="transmembrane region" description="Helical" evidence="2">
    <location>
        <begin position="349"/>
        <end position="369"/>
    </location>
</feature>
<feature type="transmembrane region" description="Helical" evidence="2">
    <location>
        <begin position="400"/>
        <end position="420"/>
    </location>
</feature>
<feature type="transmembrane region" description="Helical" evidence="2">
    <location>
        <begin position="555"/>
        <end position="575"/>
    </location>
</feature>
<feature type="transmembrane region" description="Helical" evidence="2">
    <location>
        <begin position="874"/>
        <end position="894"/>
    </location>
</feature>
<feature type="transmembrane region" description="Helical" evidence="2">
    <location>
        <begin position="898"/>
        <end position="918"/>
    </location>
</feature>
<feature type="transmembrane region" description="Helical" evidence="2">
    <location>
        <begin position="930"/>
        <end position="950"/>
    </location>
</feature>
<feature type="transmembrane region" description="Helical" evidence="2">
    <location>
        <begin position="973"/>
        <end position="993"/>
    </location>
</feature>
<feature type="transmembrane region" description="Helical" evidence="2">
    <location>
        <begin position="996"/>
        <end position="1016"/>
    </location>
</feature>
<feature type="region of interest" description="Disordered" evidence="3">
    <location>
        <begin position="1"/>
        <end position="26"/>
    </location>
</feature>
<feature type="region of interest" description="Disordered" evidence="3">
    <location>
        <begin position="1056"/>
        <end position="1078"/>
    </location>
</feature>
<feature type="compositionally biased region" description="Acidic residues" evidence="3">
    <location>
        <begin position="1066"/>
        <end position="1078"/>
    </location>
</feature>
<accession>P9WJU4</accession>
<accession>L0TFD0</accession>
<accession>O07800</accession>
<dbReference type="EMBL" id="AE000516">
    <property type="protein sequence ID" value="AAK48298.1"/>
    <property type="molecule type" value="Genomic_DNA"/>
</dbReference>
<dbReference type="PIR" id="C70522">
    <property type="entry name" value="C70522"/>
</dbReference>
<dbReference type="RefSeq" id="WP_003899710.1">
    <property type="nucleotide sequence ID" value="NZ_KK341227.1"/>
</dbReference>
<dbReference type="SMR" id="P9WJU4"/>
<dbReference type="KEGG" id="mtc:MT3931"/>
<dbReference type="PATRIC" id="fig|83331.31.peg.4228"/>
<dbReference type="HOGENOM" id="CLU_005108_3_2_11"/>
<dbReference type="Proteomes" id="UP000001020">
    <property type="component" value="Chromosome"/>
</dbReference>
<dbReference type="GO" id="GO:0005886">
    <property type="term" value="C:plasma membrane"/>
    <property type="evidence" value="ECO:0007669"/>
    <property type="project" value="UniProtKB-SubCell"/>
</dbReference>
<dbReference type="GO" id="GO:0071555">
    <property type="term" value="P:cell wall organization"/>
    <property type="evidence" value="ECO:0007669"/>
    <property type="project" value="UniProtKB-KW"/>
</dbReference>
<dbReference type="GO" id="GO:0006869">
    <property type="term" value="P:lipid transport"/>
    <property type="evidence" value="ECO:0007669"/>
    <property type="project" value="UniProtKB-KW"/>
</dbReference>
<dbReference type="FunFam" id="1.20.1640.10:FF:000018">
    <property type="entry name" value="Transmembrane transport protein MmpL10"/>
    <property type="match status" value="1"/>
</dbReference>
<dbReference type="FunFam" id="1.20.1640.10:FF:000020">
    <property type="entry name" value="Transmembrane transport protein MmpL10"/>
    <property type="match status" value="1"/>
</dbReference>
<dbReference type="Gene3D" id="1.20.1640.10">
    <property type="entry name" value="Multidrug efflux transporter AcrB transmembrane domain"/>
    <property type="match status" value="2"/>
</dbReference>
<dbReference type="InterPro" id="IPR004869">
    <property type="entry name" value="MMPL_dom"/>
</dbReference>
<dbReference type="InterPro" id="IPR050545">
    <property type="entry name" value="Mycobact_MmpL"/>
</dbReference>
<dbReference type="InterPro" id="IPR000731">
    <property type="entry name" value="SSD"/>
</dbReference>
<dbReference type="PANTHER" id="PTHR33406">
    <property type="entry name" value="MEMBRANE PROTEIN MJ1562-RELATED"/>
    <property type="match status" value="1"/>
</dbReference>
<dbReference type="PANTHER" id="PTHR33406:SF6">
    <property type="entry name" value="MEMBRANE PROTEIN YDGH-RELATED"/>
    <property type="match status" value="1"/>
</dbReference>
<dbReference type="Pfam" id="PF03176">
    <property type="entry name" value="MMPL"/>
    <property type="match status" value="2"/>
</dbReference>
<dbReference type="SUPFAM" id="SSF82866">
    <property type="entry name" value="Multidrug efflux transporter AcrB transmembrane domain"/>
    <property type="match status" value="2"/>
</dbReference>
<dbReference type="PROSITE" id="PS50156">
    <property type="entry name" value="SSD"/>
    <property type="match status" value="1"/>
</dbReference>
<gene>
    <name type="primary">mmpL8</name>
    <name type="ordered locus">MT3931</name>
</gene>
<evidence type="ECO:0000250" key="1">
    <source>
        <dbReference type="UniProtKB" id="P9WJU5"/>
    </source>
</evidence>
<evidence type="ECO:0000255" key="2"/>
<evidence type="ECO:0000256" key="3">
    <source>
        <dbReference type="SAM" id="MobiDB-lite"/>
    </source>
</evidence>
<evidence type="ECO:0000305" key="4"/>
<sequence>MCDVLMQPVRTPRPSTNLRSKPLRPTGDGGVFPRLGRLIVRRPWVVIAFWVALAGLLAPTVPSLDAISQRHPVAILPSDAPVLVSTRQMTAAFREAGLQSVAVVVLSDAKGLGAADERSYKELVDALRRDTRDVVMLQDFVTTPPLRELMTSKDNQAWILPVGLPGDLGSTQSKQAYARVADIVEHQVAGSTLTANLTGPAATVADLNLTGQRDRSRIEFAITILLLVILLIIYGNPITMVLPLITIGMSVVVAQRLVAIAGLAGLGIANQSIIFMSGMMVGAGTDYAVFLISRYHDYLRQGADSDQAVKKALTSIGKVIAASAATVAITFLGMVFTQLGILKTVGPMLGISVAVVFFAAVTLLPALMVLTGRRGWIAPRRDLTRRFWRSSGVHIVRRPKTHLLASALVLVILAGCAGLARYNYDDRKTLPASVESSIGYAALDKHFPSNLIIPEYLFIQSSTDLRTPKALADLEQMVQRVSQVPGVAMVRGITRPAGRSLEQARTSWQAGEVGSKLDEGSKQIAVHTGDIDKLAGGANLMASKLGDVRAQVNRAISTVGGLIDALAYLQDLLGGNRVLGELEGAEKLIGSMRALGDTIDADASFVANNTEWASPVLGALDSSPMCTADPACASARTELQRLVTARDDGTLAKISELARQLQATRAVQTLAATVSGLRGALATVIRAMGSLGMSSPGGVRSKINLVNKGVNDLADGSRQLAEGVQLLVDQVKKMGFGLGEASAFLLAMKDTATTPAMAGFYIPPELLSYATGESVKAETMPSEYRDLLGGLNVDQLKKVAAAFISPDGHSIRYLIQTDLNPFSTAAMDQIDAITAAARGAQPNTALADAKVSVVGLPVVLKDTRDYSDHDLRLIIAMTVCIVLLILIVLLRAIVAPLYLIGSVIVSYLAALGIGVIVFQFLLGQEMHWSIPGLTFVILVAVGADYNMLLISRLREEAVLGVRSGVIRTVASTGGVITAAGLIMAASMYGLVFASLGSVVQGAFVLGTGLLLDTFLVRTVTVPAIAVLVGQANWWLPSSWRPATWWPLGRRRGRAQRTKRKPLLPKEEEEQSPPDDDDLIGLWLHDGLRL</sequence>
<organism>
    <name type="scientific">Mycobacterium tuberculosis (strain CDC 1551 / Oshkosh)</name>
    <dbReference type="NCBI Taxonomy" id="83331"/>
    <lineage>
        <taxon>Bacteria</taxon>
        <taxon>Bacillati</taxon>
        <taxon>Actinomycetota</taxon>
        <taxon>Actinomycetes</taxon>
        <taxon>Mycobacteriales</taxon>
        <taxon>Mycobacteriaceae</taxon>
        <taxon>Mycobacterium</taxon>
        <taxon>Mycobacterium tuberculosis complex</taxon>
    </lineage>
</organism>